<feature type="chain" id="PRO_0000415698" description="Outer envelope pore protein 16-3, chloroplastic/mitochondrial">
    <location>
        <begin position="1"/>
        <end position="159"/>
    </location>
</feature>
<feature type="transmembrane region" description="Helical" evidence="2">
    <location>
        <begin position="24"/>
        <end position="40"/>
    </location>
</feature>
<feature type="transmembrane region" description="Helical" evidence="2">
    <location>
        <begin position="62"/>
        <end position="79"/>
    </location>
</feature>
<feature type="transmembrane region" description="Helical" evidence="2">
    <location>
        <begin position="92"/>
        <end position="109"/>
    </location>
</feature>
<feature type="region of interest" description="Contains beta strands" evidence="1">
    <location>
        <begin position="1"/>
        <end position="65"/>
    </location>
</feature>
<feature type="modified residue" description="N-acetylmethionine" evidence="8">
    <location>
        <position position="1"/>
    </location>
</feature>
<feature type="splice variant" id="VSP_042321" description="In isoform 2." evidence="7">
    <original>M</original>
    <variation>MFNLCALGRTVEEIM</variation>
    <location>
        <position position="1"/>
    </location>
</feature>
<feature type="helix" evidence="9">
    <location>
        <begin position="15"/>
        <end position="40"/>
    </location>
</feature>
<feature type="helix" evidence="9">
    <location>
        <begin position="45"/>
        <end position="47"/>
    </location>
</feature>
<feature type="helix" evidence="9">
    <location>
        <begin position="52"/>
        <end position="86"/>
    </location>
</feature>
<feature type="helix" evidence="9">
    <location>
        <begin position="93"/>
        <end position="111"/>
    </location>
</feature>
<feature type="helix" evidence="9">
    <location>
        <begin position="114"/>
        <end position="130"/>
    </location>
</feature>
<proteinExistence type="evidence at protein level"/>
<dbReference type="EMBL" id="DQ386643">
    <property type="protein sequence ID" value="ABD48955.1"/>
    <property type="molecule type" value="mRNA"/>
</dbReference>
<dbReference type="EMBL" id="AC002561">
    <property type="protein sequence ID" value="AAB88646.1"/>
    <property type="molecule type" value="Genomic_DNA"/>
</dbReference>
<dbReference type="EMBL" id="CP002685">
    <property type="protein sequence ID" value="AEC10086.1"/>
    <property type="molecule type" value="Genomic_DNA"/>
</dbReference>
<dbReference type="EMBL" id="CP002685">
    <property type="protein sequence ID" value="AEC10087.1"/>
    <property type="molecule type" value="Genomic_DNA"/>
</dbReference>
<dbReference type="EMBL" id="CP002685">
    <property type="protein sequence ID" value="AEC10088.1"/>
    <property type="molecule type" value="Genomic_DNA"/>
</dbReference>
<dbReference type="EMBL" id="CP002685">
    <property type="protein sequence ID" value="AEC10089.1"/>
    <property type="molecule type" value="Genomic_DNA"/>
</dbReference>
<dbReference type="EMBL" id="CP002685">
    <property type="protein sequence ID" value="ANM62006.1"/>
    <property type="molecule type" value="Genomic_DNA"/>
</dbReference>
<dbReference type="EMBL" id="AY086879">
    <property type="protein sequence ID" value="AAM63925.1"/>
    <property type="molecule type" value="mRNA"/>
</dbReference>
<dbReference type="EMBL" id="BT025617">
    <property type="protein sequence ID" value="ABF59035.1"/>
    <property type="molecule type" value="mRNA"/>
</dbReference>
<dbReference type="PIR" id="T00930">
    <property type="entry name" value="T00930"/>
</dbReference>
<dbReference type="RefSeq" id="NP_001031527.1">
    <molecule id="O48528-2"/>
    <property type="nucleotide sequence ID" value="NM_001036450.2"/>
</dbReference>
<dbReference type="RefSeq" id="NP_001031528.1">
    <molecule id="O48528-1"/>
    <property type="nucleotide sequence ID" value="NM_001036451.2"/>
</dbReference>
<dbReference type="RefSeq" id="NP_001031529.1">
    <molecule id="O48528-1"/>
    <property type="nucleotide sequence ID" value="NM_001036452.1"/>
</dbReference>
<dbReference type="RefSeq" id="NP_001324189.1">
    <molecule id="O48528-1"/>
    <property type="nucleotide sequence ID" value="NM_001336959.1"/>
</dbReference>
<dbReference type="RefSeq" id="NP_565968.1">
    <molecule id="O48528-1"/>
    <property type="nucleotide sequence ID" value="NM_129783.4"/>
</dbReference>
<dbReference type="PDB" id="8BEF">
    <property type="method" value="EM"/>
    <property type="resolution" value="2.13 A"/>
    <property type="chains" value="Y=1-159"/>
</dbReference>
<dbReference type="PDB" id="8BPX">
    <property type="method" value="EM"/>
    <property type="resolution" value="2.09 A"/>
    <property type="chains" value="Y=1-159"/>
</dbReference>
<dbReference type="PDB" id="8BQ5">
    <property type="method" value="EM"/>
    <property type="resolution" value="2.73 A"/>
    <property type="chains" value="Y=1-159"/>
</dbReference>
<dbReference type="PDB" id="8BQ6">
    <property type="method" value="EM"/>
    <property type="resolution" value="2.80 A"/>
    <property type="chains" value="Y=1-159"/>
</dbReference>
<dbReference type="PDBsum" id="8BEF"/>
<dbReference type="PDBsum" id="8BPX"/>
<dbReference type="PDBsum" id="8BQ5"/>
<dbReference type="PDBsum" id="8BQ6"/>
<dbReference type="EMDB" id="EMD-16000"/>
<dbReference type="EMDB" id="EMD-16168"/>
<dbReference type="EMDB" id="EMD-16171"/>
<dbReference type="EMDB" id="EMD-16172"/>
<dbReference type="SMR" id="O48528"/>
<dbReference type="BioGRID" id="4158">
    <property type="interactions" value="1"/>
</dbReference>
<dbReference type="FunCoup" id="O48528">
    <property type="interactions" value="1138"/>
</dbReference>
<dbReference type="IntAct" id="O48528">
    <property type="interactions" value="1"/>
</dbReference>
<dbReference type="STRING" id="3702.O48528"/>
<dbReference type="iPTMnet" id="O48528"/>
<dbReference type="MetOSite" id="O48528"/>
<dbReference type="PaxDb" id="3702-AT2G42210.2"/>
<dbReference type="ProteomicsDB" id="248897">
    <molecule id="O48528-1"/>
</dbReference>
<dbReference type="DNASU" id="818821"/>
<dbReference type="EnsemblPlants" id="AT2G42210.1">
    <molecule id="O48528-1"/>
    <property type="protein sequence ID" value="AT2G42210.1"/>
    <property type="gene ID" value="AT2G42210"/>
</dbReference>
<dbReference type="EnsemblPlants" id="AT2G42210.2">
    <molecule id="O48528-2"/>
    <property type="protein sequence ID" value="AT2G42210.2"/>
    <property type="gene ID" value="AT2G42210"/>
</dbReference>
<dbReference type="EnsemblPlants" id="AT2G42210.3">
    <molecule id="O48528-1"/>
    <property type="protein sequence ID" value="AT2G42210.3"/>
    <property type="gene ID" value="AT2G42210"/>
</dbReference>
<dbReference type="EnsemblPlants" id="AT2G42210.4">
    <molecule id="O48528-1"/>
    <property type="protein sequence ID" value="AT2G42210.4"/>
    <property type="gene ID" value="AT2G42210"/>
</dbReference>
<dbReference type="EnsemblPlants" id="AT2G42210.5">
    <molecule id="O48528-1"/>
    <property type="protein sequence ID" value="AT2G42210.5"/>
    <property type="gene ID" value="AT2G42210"/>
</dbReference>
<dbReference type="GeneID" id="818821"/>
<dbReference type="Gramene" id="AT2G42210.1">
    <molecule id="O48528-1"/>
    <property type="protein sequence ID" value="AT2G42210.1"/>
    <property type="gene ID" value="AT2G42210"/>
</dbReference>
<dbReference type="Gramene" id="AT2G42210.2">
    <molecule id="O48528-2"/>
    <property type="protein sequence ID" value="AT2G42210.2"/>
    <property type="gene ID" value="AT2G42210"/>
</dbReference>
<dbReference type="Gramene" id="AT2G42210.3">
    <molecule id="O48528-1"/>
    <property type="protein sequence ID" value="AT2G42210.3"/>
    <property type="gene ID" value="AT2G42210"/>
</dbReference>
<dbReference type="Gramene" id="AT2G42210.4">
    <molecule id="O48528-1"/>
    <property type="protein sequence ID" value="AT2G42210.4"/>
    <property type="gene ID" value="AT2G42210"/>
</dbReference>
<dbReference type="Gramene" id="AT2G42210.5">
    <molecule id="O48528-1"/>
    <property type="protein sequence ID" value="AT2G42210.5"/>
    <property type="gene ID" value="AT2G42210"/>
</dbReference>
<dbReference type="KEGG" id="ath:AT2G42210"/>
<dbReference type="Araport" id="AT2G42210"/>
<dbReference type="TAIR" id="AT2G42210">
    <property type="gene designation" value="OEP16-3"/>
</dbReference>
<dbReference type="eggNOG" id="KOG3225">
    <property type="taxonomic scope" value="Eukaryota"/>
</dbReference>
<dbReference type="HOGENOM" id="CLU_114728_0_0_1"/>
<dbReference type="InParanoid" id="O48528"/>
<dbReference type="OrthoDB" id="1913277at2759"/>
<dbReference type="PRO" id="PR:O48528"/>
<dbReference type="Proteomes" id="UP000006548">
    <property type="component" value="Chromosome 2"/>
</dbReference>
<dbReference type="ExpressionAtlas" id="O48528">
    <property type="expression patterns" value="baseline and differential"/>
</dbReference>
<dbReference type="GO" id="GO:0009507">
    <property type="term" value="C:chloroplast"/>
    <property type="evidence" value="ECO:0007005"/>
    <property type="project" value="TAIR"/>
</dbReference>
<dbReference type="GO" id="GO:0009707">
    <property type="term" value="C:chloroplast outer membrane"/>
    <property type="evidence" value="ECO:0007669"/>
    <property type="project" value="UniProtKB-SubCell"/>
</dbReference>
<dbReference type="GO" id="GO:0005829">
    <property type="term" value="C:cytosol"/>
    <property type="evidence" value="ECO:0007005"/>
    <property type="project" value="TAIR"/>
</dbReference>
<dbReference type="GO" id="GO:0005741">
    <property type="term" value="C:mitochondrial outer membrane"/>
    <property type="evidence" value="ECO:0007669"/>
    <property type="project" value="UniProtKB-SubCell"/>
</dbReference>
<dbReference type="GO" id="GO:0005739">
    <property type="term" value="C:mitochondrion"/>
    <property type="evidence" value="ECO:0007005"/>
    <property type="project" value="TAIR"/>
</dbReference>
<dbReference type="GO" id="GO:0009527">
    <property type="term" value="C:plastid outer membrane"/>
    <property type="evidence" value="ECO:0000250"/>
    <property type="project" value="TAIR"/>
</dbReference>
<dbReference type="GO" id="GO:0046930">
    <property type="term" value="C:pore complex"/>
    <property type="evidence" value="ECO:0007669"/>
    <property type="project" value="UniProtKB-KW"/>
</dbReference>
<dbReference type="GO" id="GO:0042721">
    <property type="term" value="C:TIM22 mitochondrial import inner membrane insertion complex"/>
    <property type="evidence" value="ECO:0007669"/>
    <property type="project" value="InterPro"/>
</dbReference>
<dbReference type="GO" id="GO:0015288">
    <property type="term" value="F:porin activity"/>
    <property type="evidence" value="ECO:0007669"/>
    <property type="project" value="UniProtKB-KW"/>
</dbReference>
<dbReference type="GO" id="GO:0042803">
    <property type="term" value="F:protein homodimerization activity"/>
    <property type="evidence" value="ECO:0000250"/>
    <property type="project" value="UniProtKB"/>
</dbReference>
<dbReference type="GO" id="GO:0006811">
    <property type="term" value="P:monoatomic ion transport"/>
    <property type="evidence" value="ECO:0007669"/>
    <property type="project" value="UniProtKB-KW"/>
</dbReference>
<dbReference type="GO" id="GO:0045039">
    <property type="term" value="P:protein insertion into mitochondrial inner membrane"/>
    <property type="evidence" value="ECO:0007669"/>
    <property type="project" value="InterPro"/>
</dbReference>
<dbReference type="InterPro" id="IPR039175">
    <property type="entry name" value="TIM22"/>
</dbReference>
<dbReference type="PANTHER" id="PTHR14110">
    <property type="entry name" value="MITOCHONDRIAL IMPORT INNER MEMBRANE TRANSLOCASE SUBUNIT TIM22"/>
    <property type="match status" value="1"/>
</dbReference>
<dbReference type="PANTHER" id="PTHR14110:SF18">
    <property type="entry name" value="OUTER ENVELOPE PORE PROTEIN 16-3, CHLOROPLASTIC_MITOCHONDRIAL"/>
    <property type="match status" value="1"/>
</dbReference>
<dbReference type="Pfam" id="PF02466">
    <property type="entry name" value="Tim17"/>
    <property type="match status" value="1"/>
</dbReference>
<evidence type="ECO:0000250" key="1"/>
<evidence type="ECO:0000255" key="2"/>
<evidence type="ECO:0000269" key="3">
    <source>
    </source>
</evidence>
<evidence type="ECO:0000269" key="4">
    <source>
    </source>
</evidence>
<evidence type="ECO:0000269" key="5">
    <source>
    </source>
</evidence>
<evidence type="ECO:0000269" key="6">
    <source>
    </source>
</evidence>
<evidence type="ECO:0000305" key="7"/>
<evidence type="ECO:0007744" key="8">
    <source>
    </source>
</evidence>
<evidence type="ECO:0007829" key="9">
    <source>
        <dbReference type="PDB" id="8BEF"/>
    </source>
</evidence>
<gene>
    <name type="primary">OEP163</name>
    <name type="synonym">B14.7</name>
    <name type="ordered locus">At2g42210</name>
    <name type="ORF">T24P15.12</name>
</gene>
<organism>
    <name type="scientific">Arabidopsis thaliana</name>
    <name type="common">Mouse-ear cress</name>
    <dbReference type="NCBI Taxonomy" id="3702"/>
    <lineage>
        <taxon>Eukaryota</taxon>
        <taxon>Viridiplantae</taxon>
        <taxon>Streptophyta</taxon>
        <taxon>Embryophyta</taxon>
        <taxon>Tracheophyta</taxon>
        <taxon>Spermatophyta</taxon>
        <taxon>Magnoliopsida</taxon>
        <taxon>eudicotyledons</taxon>
        <taxon>Gunneridae</taxon>
        <taxon>Pentapetalae</taxon>
        <taxon>rosids</taxon>
        <taxon>malvids</taxon>
        <taxon>Brassicales</taxon>
        <taxon>Brassicaceae</taxon>
        <taxon>Camelineae</taxon>
        <taxon>Arabidopsis</taxon>
    </lineage>
</organism>
<comment type="function">
    <text evidence="1">Voltage-dependent high-conductance channel with a slight cation-selectivity; selective for amino acids but excludes triosephosphates or uncharged sugars. Non-essential amino acid-selective channel protein and translocation pore for NADPH:protochlorophyllide oxidoreductase A (PORA) and possibly PORB (By similarity).</text>
</comment>
<comment type="subunit">
    <text evidence="1 3 6">Homodimer and oligomers in membrane (By similarity). Part of both the NADH-ubiquinone oxidoreductase complex I and of the TIM17:23 complex. Interacts with TIM23-2.</text>
</comment>
<comment type="subcellular location">
    <subcellularLocation>
        <location evidence="4">Plastid</location>
        <location evidence="4">Chloroplast outer membrane</location>
        <topology>Multi-pass membrane protein</topology>
    </subcellularLocation>
    <subcellularLocation>
        <location evidence="5">Mitochondrion outer membrane</location>
        <topology evidence="2">Multi-pass membrane protein</topology>
    </subcellularLocation>
    <subcellularLocation>
        <location evidence="5">Mitochondrion inner membrane</location>
        <topology evidence="2">Multi-pass membrane protein</topology>
    </subcellularLocation>
</comment>
<comment type="alternative products">
    <event type="alternative splicing"/>
    <isoform>
        <id>O48528-1</id>
        <name>1</name>
        <sequence type="displayed"/>
    </isoform>
    <isoform>
        <id>O48528-2</id>
        <name>2</name>
        <sequence type="described" ref="VSP_042321"/>
    </isoform>
</comment>
<comment type="disruption phenotype">
    <text evidence="6">Lethal when homozygous.</text>
</comment>
<comment type="similarity">
    <text evidence="7">Belongs to the Tim17/Tim22/Tim23 family. Plastid outer envelope porin OEP16 (TC 1.B.30) subfamily.</text>
</comment>
<keyword id="KW-0002">3D-structure</keyword>
<keyword id="KW-0007">Acetylation</keyword>
<keyword id="KW-0025">Alternative splicing</keyword>
<keyword id="KW-0150">Chloroplast</keyword>
<keyword id="KW-0406">Ion transport</keyword>
<keyword id="KW-0472">Membrane</keyword>
<keyword id="KW-0496">Mitochondrion</keyword>
<keyword id="KW-0999">Mitochondrion inner membrane</keyword>
<keyword id="KW-1000">Mitochondrion outer membrane</keyword>
<keyword id="KW-0934">Plastid</keyword>
<keyword id="KW-1002">Plastid outer membrane</keyword>
<keyword id="KW-0626">Porin</keyword>
<keyword id="KW-1185">Reference proteome</keyword>
<keyword id="KW-0812">Transmembrane</keyword>
<keyword id="KW-1134">Transmembrane beta strand</keyword>
<keyword id="KW-1133">Transmembrane helix</keyword>
<keyword id="KW-0813">Transport</keyword>
<accession>O48528</accession>
<accession>F4IMZ5</accession>
<name>OP163_ARATH</name>
<protein>
    <recommendedName>
        <fullName>Outer envelope pore protein 16-3, chloroplastic/mitochondrial</fullName>
    </recommendedName>
    <alternativeName>
        <fullName>Chloroplastic outer envelope pore protein of 16 kDa 3</fullName>
        <shortName>AtOEP16-3</shortName>
        <shortName>OEP16-3</shortName>
    </alternativeName>
    <alternativeName>
        <fullName>Mitochondrial complex I subunit B14.7</fullName>
    </alternativeName>
</protein>
<sequence length="159" mass="16999">MDPAEMRYLEEEDGPLMKTIKGSITGFGAGTIYGTILATWKDVPRVERNVALPGLIRTLKMMGTHGLTFAAIGGVYIGVEQLVQNFRSKRDFYNGAIGGFVAGASVLGYRARSIPTAIAAGATLAVTSALIDSGGQTTRVDNGREYYPYTVEKRAEADS</sequence>
<reference key="1">
    <citation type="journal article" date="2007" name="Plant Physiol.">
        <title>Characterization of the preprotein and amino acid transporter gene family in Arabidopsis.</title>
        <authorList>
            <person name="Murcha M.W."/>
            <person name="Elhafez D."/>
            <person name="Lister R."/>
            <person name="Tonti-Filippini J."/>
            <person name="Baumgartner M."/>
            <person name="Philippar K."/>
            <person name="Carrie C."/>
            <person name="Mokranjac D."/>
            <person name="Soll J."/>
            <person name="Whelan J."/>
        </authorList>
    </citation>
    <scope>NUCLEOTIDE SEQUENCE [MRNA] (ISOFORM 1)</scope>
    <scope>SUBCELLULAR LOCATION</scope>
</reference>
<reference key="2">
    <citation type="journal article" date="1999" name="Nature">
        <title>Sequence and analysis of chromosome 2 of the plant Arabidopsis thaliana.</title>
        <authorList>
            <person name="Lin X."/>
            <person name="Kaul S."/>
            <person name="Rounsley S.D."/>
            <person name="Shea T.P."/>
            <person name="Benito M.-I."/>
            <person name="Town C.D."/>
            <person name="Fujii C.Y."/>
            <person name="Mason T.M."/>
            <person name="Bowman C.L."/>
            <person name="Barnstead M.E."/>
            <person name="Feldblyum T.V."/>
            <person name="Buell C.R."/>
            <person name="Ketchum K.A."/>
            <person name="Lee J.J."/>
            <person name="Ronning C.M."/>
            <person name="Koo H.L."/>
            <person name="Moffat K.S."/>
            <person name="Cronin L.A."/>
            <person name="Shen M."/>
            <person name="Pai G."/>
            <person name="Van Aken S."/>
            <person name="Umayam L."/>
            <person name="Tallon L.J."/>
            <person name="Gill J.E."/>
            <person name="Adams M.D."/>
            <person name="Carrera A.J."/>
            <person name="Creasy T.H."/>
            <person name="Goodman H.M."/>
            <person name="Somerville C.R."/>
            <person name="Copenhaver G.P."/>
            <person name="Preuss D."/>
            <person name="Nierman W.C."/>
            <person name="White O."/>
            <person name="Eisen J.A."/>
            <person name="Salzberg S.L."/>
            <person name="Fraser C.M."/>
            <person name="Venter J.C."/>
        </authorList>
    </citation>
    <scope>NUCLEOTIDE SEQUENCE [LARGE SCALE GENOMIC DNA]</scope>
    <source>
        <strain>cv. Columbia</strain>
    </source>
</reference>
<reference key="3">
    <citation type="journal article" date="2017" name="Plant J.">
        <title>Araport11: a complete reannotation of the Arabidopsis thaliana reference genome.</title>
        <authorList>
            <person name="Cheng C.Y."/>
            <person name="Krishnakumar V."/>
            <person name="Chan A.P."/>
            <person name="Thibaud-Nissen F."/>
            <person name="Schobel S."/>
            <person name="Town C.D."/>
        </authorList>
    </citation>
    <scope>GENOME REANNOTATION</scope>
    <source>
        <strain>cv. Columbia</strain>
    </source>
</reference>
<reference key="4">
    <citation type="submission" date="2006-05" db="EMBL/GenBank/DDBJ databases">
        <title>Arabidopsis ORF clones.</title>
        <authorList>
            <person name="Quinitio C."/>
            <person name="Chen H."/>
            <person name="Kim C.J."/>
            <person name="Shinn P."/>
            <person name="Ecker J.R."/>
        </authorList>
    </citation>
    <scope>NUCLEOTIDE SEQUENCE [LARGE SCALE MRNA] (ISOFORM 1)</scope>
    <source>
        <strain>cv. Columbia</strain>
    </source>
</reference>
<reference key="5">
    <citation type="submission" date="2002-03" db="EMBL/GenBank/DDBJ databases">
        <title>Full-length cDNA from Arabidopsis thaliana.</title>
        <authorList>
            <person name="Brover V.V."/>
            <person name="Troukhan M.E."/>
            <person name="Alexandrov N.A."/>
            <person name="Lu Y.-P."/>
            <person name="Flavell R.B."/>
            <person name="Feldmann K.A."/>
        </authorList>
    </citation>
    <scope>NUCLEOTIDE SEQUENCE [LARGE SCALE MRNA] (ISOFORM 1)</scope>
</reference>
<reference key="6">
    <citation type="journal article" date="2004" name="Plant Cell">
        <title>Experimental analysis of the Arabidopsis mitochondrial proteome highlights signaling and regulatory components, provides assessment of targeting prediction programs, and indicates plant-specific mitochondrial proteins.</title>
        <authorList>
            <person name="Heazlewood J.L."/>
            <person name="Tonti-Filippini J.S."/>
            <person name="Gout A.M."/>
            <person name="Day D.A."/>
            <person name="Whelan J."/>
            <person name="Millar A.H."/>
        </authorList>
    </citation>
    <scope>IDENTIFICATION BY MASS SPECTROMETRY</scope>
    <scope>SUBCELLULAR LOCATION [LARGE SCALE ANALYSIS]</scope>
    <source>
        <strain>cv. Landsberg erecta</strain>
    </source>
</reference>
<reference key="7">
    <citation type="journal article" date="2007" name="Plant Mol. Biol.">
        <title>Mitochondrial acyl carrier proteins in Arabidopsis thaliana are predominantly soluble matrix proteins and none can be confirmed as subunits of respiratory Complex I.</title>
        <authorList>
            <person name="Meyer E.H."/>
            <person name="Heazlewood J.L."/>
            <person name="Millar A.H."/>
        </authorList>
    </citation>
    <scope>SUBCELLULAR LOCATION</scope>
    <scope>GENE FAMILY</scope>
</reference>
<reference key="8">
    <citation type="journal article" date="2007" name="Proc. Natl. Acad. Sci. U.S.A.">
        <title>Chloroplast biogenesis: the use of mutants to study the etioplast-chloroplast transition.</title>
        <authorList>
            <person name="Philippar K."/>
            <person name="Geis T."/>
            <person name="Ilkavets I."/>
            <person name="Oster U."/>
            <person name="Schwenkert S."/>
            <person name="Meurer J."/>
            <person name="Soll J."/>
        </authorList>
    </citation>
    <scope>SUBCELLULAR LOCATION</scope>
</reference>
<reference key="9">
    <citation type="journal article" date="2008" name="J. Proteome Res.">
        <title>Resolving and identifying protein components of plant mitochondrial respiratory complexes using three dimensions of gel electrophoresis.</title>
        <authorList>
            <person name="Meyer E.H."/>
            <person name="Taylor N.L."/>
            <person name="Millar A.H."/>
        </authorList>
    </citation>
    <scope>IDENTIFICATION BY MASS SPECTROMETRY</scope>
    <scope>SUBUNIT</scope>
    <scope>SUBCELLULAR LOCATION</scope>
</reference>
<reference key="10">
    <citation type="journal article" date="2008" name="PLoS ONE">
        <title>Sorting signals, N-terminal modifications and abundance of the chloroplast proteome.</title>
        <authorList>
            <person name="Zybailov B."/>
            <person name="Rutschow H."/>
            <person name="Friso G."/>
            <person name="Rudella A."/>
            <person name="Emanuelsson O."/>
            <person name="Sun Q."/>
            <person name="van Wijk K.J."/>
        </authorList>
    </citation>
    <scope>IDENTIFICATION BY MASS SPECTROMETRY</scope>
    <scope>SUBCELLULAR LOCATION [LARGE SCALE ANALYSIS]</scope>
</reference>
<reference key="11">
    <citation type="journal article" date="2011" name="Plant Physiol.">
        <title>Defining the protein complex proteome of plant mitochondria.</title>
        <authorList>
            <person name="Klodmann J."/>
            <person name="Senkler M."/>
            <person name="Rode C."/>
            <person name="Braun H.-P."/>
        </authorList>
    </citation>
    <scope>IDENTIFICATION BY MASS SPECTROMETRY</scope>
    <scope>SUBCELLULAR LOCATION [LARGE SCALE ANALYSIS]</scope>
</reference>
<reference key="12">
    <citation type="journal article" date="2012" name="Mol. Cell. Proteomics">
        <title>Comparative large-scale characterisation of plant vs. mammal proteins reveals similar and idiosyncratic N-alpha acetylation features.</title>
        <authorList>
            <person name="Bienvenut W.V."/>
            <person name="Sumpton D."/>
            <person name="Martinez A."/>
            <person name="Lilla S."/>
            <person name="Espagne C."/>
            <person name="Meinnel T."/>
            <person name="Giglione C."/>
        </authorList>
    </citation>
    <scope>ACETYLATION [LARGE SCALE ANALYSIS] AT MET-1</scope>
    <scope>IDENTIFICATION BY MASS SPECTROMETRY [LARGE SCALE ANALYSIS]</scope>
</reference>
<reference key="13">
    <citation type="journal article" date="2012" name="Plant Cell">
        <title>Dual location of the mitochondrial preprotein transporters B14.7 and Tim23-2 in complex I and the TIM17:23 complex in Arabidopsis links mitochondrial activity and biogenesis.</title>
        <authorList>
            <person name="Wang Y."/>
            <person name="Carrie C."/>
            <person name="Giraud E."/>
            <person name="Elhafez D."/>
            <person name="Narsai R."/>
            <person name="Duncan O."/>
            <person name="Whelan J."/>
            <person name="Murcha M.W."/>
        </authorList>
    </citation>
    <scope>INTERACTION WITH TIM23-2</scope>
    <scope>SUBCELLULAR LOCATION</scope>
    <scope>SUBUNIT</scope>
    <scope>DISRUPTION PHENOTYPE</scope>
</reference>